<gene>
    <name evidence="1" type="primary">aspS</name>
    <name type="ordered locus">RL1605</name>
</gene>
<sequence length="596" mass="66918">MHRYRSHTCAALRKSDVGSTVRISGWVHRVRDHGGVLFIDLRDHYGITQVVADPDSPAFQMAETVRGEWVIRIDGLVKARTEDTVNKTMATGEIELYAQEIEVLSAAKELPLPVFGEPDYPEDVRLKYRFLDLRRETLHRNIVKRTQVISAMRREMGNVGFTEYTTPILTASSPEGARDFLVPSRIHPGTFYALPQAPQQYKQLLMVAGFDRYFQIAPCFRDEDPRADRLPGEFYQLDLEMSFVTQEDVWNTMGPLMTSIFEEFAEGKPVTKEWPRIPYDEAIRKYGSDKPDLRNPIVMQAVTEHFAGSGFKVFAGMIASNPKVEIWAIPAKTGGSRAFCDRMNAWAQSTGQPGLGYIFWRKEGDKLEGAGPLAKNIGEERTDAIRTQLGLDDGDACFFVAGDPAKFYKFAGEARTKAGEELNLVDRDRFELCWIVDFPFFEWSEEDKKVDFAHNPFSMPQGGLDALQNQDPLTIKAFQYDAVCNGFEIASGSIRNQSPETMVAAFEKVGLSQQDVEDRFGGLYRAFQYGAPPHGGAAFGIDRIVMLLVGAKNLREISLFPMNQQAQDLLMGAPSPAAPTQLRELSIRPIPPVKKD</sequence>
<dbReference type="EC" id="6.1.1.23" evidence="1"/>
<dbReference type="EMBL" id="AM236080">
    <property type="protein sequence ID" value="CAK07100.1"/>
    <property type="molecule type" value="Genomic_DNA"/>
</dbReference>
<dbReference type="RefSeq" id="WP_011651287.1">
    <property type="nucleotide sequence ID" value="NC_008380.1"/>
</dbReference>
<dbReference type="SMR" id="Q1MIW0"/>
<dbReference type="EnsemblBacteria" id="CAK07100">
    <property type="protein sequence ID" value="CAK07100"/>
    <property type="gene ID" value="RL1605"/>
</dbReference>
<dbReference type="KEGG" id="rle:RL1605"/>
<dbReference type="eggNOG" id="COG0173">
    <property type="taxonomic scope" value="Bacteria"/>
</dbReference>
<dbReference type="HOGENOM" id="CLU_014330_3_2_5"/>
<dbReference type="Proteomes" id="UP000006575">
    <property type="component" value="Chromosome"/>
</dbReference>
<dbReference type="GO" id="GO:0005737">
    <property type="term" value="C:cytoplasm"/>
    <property type="evidence" value="ECO:0007669"/>
    <property type="project" value="UniProtKB-SubCell"/>
</dbReference>
<dbReference type="GO" id="GO:0004815">
    <property type="term" value="F:aspartate-tRNA ligase activity"/>
    <property type="evidence" value="ECO:0007669"/>
    <property type="project" value="UniProtKB-UniRule"/>
</dbReference>
<dbReference type="GO" id="GO:0050560">
    <property type="term" value="F:aspartate-tRNA(Asn) ligase activity"/>
    <property type="evidence" value="ECO:0007669"/>
    <property type="project" value="UniProtKB-EC"/>
</dbReference>
<dbReference type="GO" id="GO:0005524">
    <property type="term" value="F:ATP binding"/>
    <property type="evidence" value="ECO:0007669"/>
    <property type="project" value="UniProtKB-UniRule"/>
</dbReference>
<dbReference type="GO" id="GO:0003676">
    <property type="term" value="F:nucleic acid binding"/>
    <property type="evidence" value="ECO:0007669"/>
    <property type="project" value="InterPro"/>
</dbReference>
<dbReference type="GO" id="GO:0006422">
    <property type="term" value="P:aspartyl-tRNA aminoacylation"/>
    <property type="evidence" value="ECO:0007669"/>
    <property type="project" value="UniProtKB-UniRule"/>
</dbReference>
<dbReference type="CDD" id="cd00777">
    <property type="entry name" value="AspRS_core"/>
    <property type="match status" value="1"/>
</dbReference>
<dbReference type="CDD" id="cd04317">
    <property type="entry name" value="EcAspRS_like_N"/>
    <property type="match status" value="1"/>
</dbReference>
<dbReference type="Gene3D" id="3.30.930.10">
    <property type="entry name" value="Bira Bifunctional Protein, Domain 2"/>
    <property type="match status" value="1"/>
</dbReference>
<dbReference type="Gene3D" id="3.30.1360.30">
    <property type="entry name" value="GAD-like domain"/>
    <property type="match status" value="1"/>
</dbReference>
<dbReference type="Gene3D" id="2.40.50.140">
    <property type="entry name" value="Nucleic acid-binding proteins"/>
    <property type="match status" value="1"/>
</dbReference>
<dbReference type="HAMAP" id="MF_00044">
    <property type="entry name" value="Asp_tRNA_synth_type1"/>
    <property type="match status" value="1"/>
</dbReference>
<dbReference type="InterPro" id="IPR004364">
    <property type="entry name" value="Aa-tRNA-synt_II"/>
</dbReference>
<dbReference type="InterPro" id="IPR006195">
    <property type="entry name" value="aa-tRNA-synth_II"/>
</dbReference>
<dbReference type="InterPro" id="IPR045864">
    <property type="entry name" value="aa-tRNA-synth_II/BPL/LPL"/>
</dbReference>
<dbReference type="InterPro" id="IPR004524">
    <property type="entry name" value="Asp-tRNA-ligase_1"/>
</dbReference>
<dbReference type="InterPro" id="IPR047089">
    <property type="entry name" value="Asp-tRNA-ligase_1_N"/>
</dbReference>
<dbReference type="InterPro" id="IPR002312">
    <property type="entry name" value="Asp/Asn-tRNA-synth_IIb"/>
</dbReference>
<dbReference type="InterPro" id="IPR047090">
    <property type="entry name" value="AspRS_core"/>
</dbReference>
<dbReference type="InterPro" id="IPR004115">
    <property type="entry name" value="GAD-like_sf"/>
</dbReference>
<dbReference type="InterPro" id="IPR029351">
    <property type="entry name" value="GAD_dom"/>
</dbReference>
<dbReference type="InterPro" id="IPR012340">
    <property type="entry name" value="NA-bd_OB-fold"/>
</dbReference>
<dbReference type="InterPro" id="IPR004365">
    <property type="entry name" value="NA-bd_OB_tRNA"/>
</dbReference>
<dbReference type="NCBIfam" id="TIGR00459">
    <property type="entry name" value="aspS_bact"/>
    <property type="match status" value="1"/>
</dbReference>
<dbReference type="NCBIfam" id="NF001750">
    <property type="entry name" value="PRK00476.1"/>
    <property type="match status" value="1"/>
</dbReference>
<dbReference type="PANTHER" id="PTHR22594:SF5">
    <property type="entry name" value="ASPARTATE--TRNA LIGASE, MITOCHONDRIAL"/>
    <property type="match status" value="1"/>
</dbReference>
<dbReference type="PANTHER" id="PTHR22594">
    <property type="entry name" value="ASPARTYL/LYSYL-TRNA SYNTHETASE"/>
    <property type="match status" value="1"/>
</dbReference>
<dbReference type="Pfam" id="PF02938">
    <property type="entry name" value="GAD"/>
    <property type="match status" value="1"/>
</dbReference>
<dbReference type="Pfam" id="PF00152">
    <property type="entry name" value="tRNA-synt_2"/>
    <property type="match status" value="1"/>
</dbReference>
<dbReference type="Pfam" id="PF01336">
    <property type="entry name" value="tRNA_anti-codon"/>
    <property type="match status" value="1"/>
</dbReference>
<dbReference type="PRINTS" id="PR01042">
    <property type="entry name" value="TRNASYNTHASP"/>
</dbReference>
<dbReference type="SUPFAM" id="SSF55681">
    <property type="entry name" value="Class II aaRS and biotin synthetases"/>
    <property type="match status" value="1"/>
</dbReference>
<dbReference type="SUPFAM" id="SSF55261">
    <property type="entry name" value="GAD domain-like"/>
    <property type="match status" value="1"/>
</dbReference>
<dbReference type="SUPFAM" id="SSF50249">
    <property type="entry name" value="Nucleic acid-binding proteins"/>
    <property type="match status" value="1"/>
</dbReference>
<dbReference type="PROSITE" id="PS50862">
    <property type="entry name" value="AA_TRNA_LIGASE_II"/>
    <property type="match status" value="1"/>
</dbReference>
<protein>
    <recommendedName>
        <fullName evidence="1">Aspartate--tRNA(Asp/Asn) ligase</fullName>
        <ecNumber evidence="1">6.1.1.23</ecNumber>
    </recommendedName>
    <alternativeName>
        <fullName evidence="1">Aspartyl-tRNA synthetase</fullName>
        <shortName evidence="1">AspRS</shortName>
    </alternativeName>
    <alternativeName>
        <fullName evidence="1">Non-discriminating aspartyl-tRNA synthetase</fullName>
        <shortName evidence="1">ND-AspRS</shortName>
    </alternativeName>
</protein>
<reference key="1">
    <citation type="journal article" date="2006" name="Genome Biol.">
        <title>The genome of Rhizobium leguminosarum has recognizable core and accessory components.</title>
        <authorList>
            <person name="Young J.P.W."/>
            <person name="Crossman L.C."/>
            <person name="Johnston A.W.B."/>
            <person name="Thomson N.R."/>
            <person name="Ghazoui Z.F."/>
            <person name="Hull K.H."/>
            <person name="Wexler M."/>
            <person name="Curson A.R.J."/>
            <person name="Todd J.D."/>
            <person name="Poole P.S."/>
            <person name="Mauchline T.H."/>
            <person name="East A.K."/>
            <person name="Quail M.A."/>
            <person name="Churcher C."/>
            <person name="Arrowsmith C."/>
            <person name="Cherevach I."/>
            <person name="Chillingworth T."/>
            <person name="Clarke K."/>
            <person name="Cronin A."/>
            <person name="Davis P."/>
            <person name="Fraser A."/>
            <person name="Hance Z."/>
            <person name="Hauser H."/>
            <person name="Jagels K."/>
            <person name="Moule S."/>
            <person name="Mungall K."/>
            <person name="Norbertczak H."/>
            <person name="Rabbinowitsch E."/>
            <person name="Sanders M."/>
            <person name="Simmonds M."/>
            <person name="Whitehead S."/>
            <person name="Parkhill J."/>
        </authorList>
    </citation>
    <scope>NUCLEOTIDE SEQUENCE [LARGE SCALE GENOMIC DNA]</scope>
    <source>
        <strain>DSM 114642 / LMG 32736 / 3841</strain>
    </source>
</reference>
<organism>
    <name type="scientific">Rhizobium johnstonii (strain DSM 114642 / LMG 32736 / 3841)</name>
    <name type="common">Rhizobium leguminosarum bv. viciae</name>
    <dbReference type="NCBI Taxonomy" id="216596"/>
    <lineage>
        <taxon>Bacteria</taxon>
        <taxon>Pseudomonadati</taxon>
        <taxon>Pseudomonadota</taxon>
        <taxon>Alphaproteobacteria</taxon>
        <taxon>Hyphomicrobiales</taxon>
        <taxon>Rhizobiaceae</taxon>
        <taxon>Rhizobium/Agrobacterium group</taxon>
        <taxon>Rhizobium</taxon>
        <taxon>Rhizobium johnstonii</taxon>
    </lineage>
</organism>
<keyword id="KW-0030">Aminoacyl-tRNA synthetase</keyword>
<keyword id="KW-0067">ATP-binding</keyword>
<keyword id="KW-0963">Cytoplasm</keyword>
<keyword id="KW-0436">Ligase</keyword>
<keyword id="KW-0547">Nucleotide-binding</keyword>
<keyword id="KW-0648">Protein biosynthesis</keyword>
<evidence type="ECO:0000255" key="1">
    <source>
        <dbReference type="HAMAP-Rule" id="MF_00044"/>
    </source>
</evidence>
<proteinExistence type="inferred from homology"/>
<comment type="function">
    <text evidence="1">Aspartyl-tRNA synthetase with relaxed tRNA specificity since it is able to aspartylate not only its cognate tRNA(Asp) but also tRNA(Asn). Reaction proceeds in two steps: L-aspartate is first activated by ATP to form Asp-AMP and then transferred to the acceptor end of tRNA(Asp/Asn).</text>
</comment>
<comment type="catalytic activity">
    <reaction evidence="1">
        <text>tRNA(Asx) + L-aspartate + ATP = L-aspartyl-tRNA(Asx) + AMP + diphosphate</text>
        <dbReference type="Rhea" id="RHEA:18349"/>
        <dbReference type="Rhea" id="RHEA-COMP:9710"/>
        <dbReference type="Rhea" id="RHEA-COMP:9711"/>
        <dbReference type="ChEBI" id="CHEBI:29991"/>
        <dbReference type="ChEBI" id="CHEBI:30616"/>
        <dbReference type="ChEBI" id="CHEBI:33019"/>
        <dbReference type="ChEBI" id="CHEBI:78442"/>
        <dbReference type="ChEBI" id="CHEBI:78516"/>
        <dbReference type="ChEBI" id="CHEBI:456215"/>
        <dbReference type="EC" id="6.1.1.23"/>
    </reaction>
</comment>
<comment type="subunit">
    <text evidence="1">Homodimer.</text>
</comment>
<comment type="subcellular location">
    <subcellularLocation>
        <location evidence="1">Cytoplasm</location>
    </subcellularLocation>
</comment>
<comment type="similarity">
    <text evidence="1">Belongs to the class-II aminoacyl-tRNA synthetase family. Type 1 subfamily.</text>
</comment>
<accession>Q1MIW0</accession>
<feature type="chain" id="PRO_1000006736" description="Aspartate--tRNA(Asp/Asn) ligase">
    <location>
        <begin position="1"/>
        <end position="596"/>
    </location>
</feature>
<feature type="region of interest" description="Aspartate" evidence="1">
    <location>
        <begin position="199"/>
        <end position="202"/>
    </location>
</feature>
<feature type="binding site" evidence="1">
    <location>
        <position position="175"/>
    </location>
    <ligand>
        <name>L-aspartate</name>
        <dbReference type="ChEBI" id="CHEBI:29991"/>
    </ligand>
</feature>
<feature type="binding site" evidence="1">
    <location>
        <begin position="221"/>
        <end position="223"/>
    </location>
    <ligand>
        <name>ATP</name>
        <dbReference type="ChEBI" id="CHEBI:30616"/>
    </ligand>
</feature>
<feature type="binding site" evidence="1">
    <location>
        <position position="221"/>
    </location>
    <ligand>
        <name>L-aspartate</name>
        <dbReference type="ChEBI" id="CHEBI:29991"/>
    </ligand>
</feature>
<feature type="binding site" evidence="1">
    <location>
        <position position="454"/>
    </location>
    <ligand>
        <name>L-aspartate</name>
        <dbReference type="ChEBI" id="CHEBI:29991"/>
    </ligand>
</feature>
<feature type="binding site" evidence="1">
    <location>
        <position position="488"/>
    </location>
    <ligand>
        <name>ATP</name>
        <dbReference type="ChEBI" id="CHEBI:30616"/>
    </ligand>
</feature>
<feature type="binding site" evidence="1">
    <location>
        <position position="495"/>
    </location>
    <ligand>
        <name>L-aspartate</name>
        <dbReference type="ChEBI" id="CHEBI:29991"/>
    </ligand>
</feature>
<feature type="binding site" evidence="1">
    <location>
        <begin position="540"/>
        <end position="543"/>
    </location>
    <ligand>
        <name>ATP</name>
        <dbReference type="ChEBI" id="CHEBI:30616"/>
    </ligand>
</feature>
<feature type="site" description="Important for tRNA non-discrimination" evidence="1">
    <location>
        <position position="33"/>
    </location>
</feature>
<name>SYDND_RHIJ3</name>